<protein>
    <recommendedName>
        <fullName>Plastocyanin</fullName>
    </recommendedName>
</protein>
<dbReference type="EMBL" id="X14342">
    <property type="protein sequence ID" value="CAA32527.1"/>
    <property type="molecule type" value="Genomic_DNA"/>
</dbReference>
<dbReference type="EMBL" id="CP000117">
    <property type="protein sequence ID" value="ABA22358.1"/>
    <property type="molecule type" value="Genomic_DNA"/>
</dbReference>
<dbReference type="PDB" id="1FA4">
    <property type="method" value="NMR"/>
    <property type="chains" value="A=35-138"/>
</dbReference>
<dbReference type="PDBsum" id="1FA4"/>
<dbReference type="BMRB" id="Q3M9H8"/>
<dbReference type="SMR" id="Q3M9H8"/>
<dbReference type="STRING" id="240292.Ava_2745"/>
<dbReference type="KEGG" id="ava:Ava_2745"/>
<dbReference type="eggNOG" id="COG3794">
    <property type="taxonomic scope" value="Bacteria"/>
</dbReference>
<dbReference type="HOGENOM" id="CLU_084115_0_1_3"/>
<dbReference type="EvolutionaryTrace" id="Q3M9H8"/>
<dbReference type="Proteomes" id="UP000002533">
    <property type="component" value="Chromosome"/>
</dbReference>
<dbReference type="GO" id="GO:0031676">
    <property type="term" value="C:plasma membrane-derived thylakoid membrane"/>
    <property type="evidence" value="ECO:0007669"/>
    <property type="project" value="UniProtKB-SubCell"/>
</dbReference>
<dbReference type="GO" id="GO:0005507">
    <property type="term" value="F:copper ion binding"/>
    <property type="evidence" value="ECO:0007669"/>
    <property type="project" value="UniProtKB-UniRule"/>
</dbReference>
<dbReference type="GO" id="GO:0009055">
    <property type="term" value="F:electron transfer activity"/>
    <property type="evidence" value="ECO:0007669"/>
    <property type="project" value="UniProtKB-UniRule"/>
</dbReference>
<dbReference type="CDD" id="cd04219">
    <property type="entry name" value="Plastocyanin"/>
    <property type="match status" value="1"/>
</dbReference>
<dbReference type="Gene3D" id="2.60.40.420">
    <property type="entry name" value="Cupredoxins - blue copper proteins"/>
    <property type="match status" value="1"/>
</dbReference>
<dbReference type="HAMAP" id="MF_00566">
    <property type="entry name" value="Cytb6_f_plastocyanin"/>
    <property type="match status" value="1"/>
</dbReference>
<dbReference type="InterPro" id="IPR000923">
    <property type="entry name" value="BlueCu_1"/>
</dbReference>
<dbReference type="InterPro" id="IPR028871">
    <property type="entry name" value="BlueCu_1_BS"/>
</dbReference>
<dbReference type="InterPro" id="IPR001235">
    <property type="entry name" value="Copper_blue_Plastocyanin"/>
</dbReference>
<dbReference type="InterPro" id="IPR008972">
    <property type="entry name" value="Cupredoxin"/>
</dbReference>
<dbReference type="InterPro" id="IPR002387">
    <property type="entry name" value="Plastocyanin"/>
</dbReference>
<dbReference type="InterPro" id="IPR023511">
    <property type="entry name" value="Plastocyanin_cyanobac"/>
</dbReference>
<dbReference type="NCBIfam" id="TIGR02656">
    <property type="entry name" value="cyanin_plasto"/>
    <property type="match status" value="1"/>
</dbReference>
<dbReference type="PANTHER" id="PTHR34192">
    <property type="entry name" value="PLASTOCYANIN MAJOR ISOFORM, CHLOROPLASTIC-RELATED"/>
    <property type="match status" value="1"/>
</dbReference>
<dbReference type="PANTHER" id="PTHR34192:SF10">
    <property type="entry name" value="PLASTOCYANIN MAJOR ISOFORM, CHLOROPLASTIC-RELATED"/>
    <property type="match status" value="1"/>
</dbReference>
<dbReference type="Pfam" id="PF00127">
    <property type="entry name" value="Copper-bind"/>
    <property type="match status" value="1"/>
</dbReference>
<dbReference type="PRINTS" id="PR00156">
    <property type="entry name" value="COPPERBLUE"/>
</dbReference>
<dbReference type="PRINTS" id="PR00157">
    <property type="entry name" value="PLASTOCYANIN"/>
</dbReference>
<dbReference type="SUPFAM" id="SSF49503">
    <property type="entry name" value="Cupredoxins"/>
    <property type="match status" value="1"/>
</dbReference>
<dbReference type="PROSITE" id="PS00196">
    <property type="entry name" value="COPPER_BLUE"/>
    <property type="match status" value="1"/>
</dbReference>
<evidence type="ECO:0000250" key="1"/>
<evidence type="ECO:0000255" key="2">
    <source>
        <dbReference type="HAMAP-Rule" id="MF_00566"/>
    </source>
</evidence>
<evidence type="ECO:0000269" key="3">
    <source>
    </source>
</evidence>
<evidence type="ECO:0000269" key="4">
    <source ref="4"/>
</evidence>
<evidence type="ECO:0007829" key="5">
    <source>
        <dbReference type="PDB" id="1FA4"/>
    </source>
</evidence>
<keyword id="KW-0002">3D-structure</keyword>
<keyword id="KW-0186">Copper</keyword>
<keyword id="KW-0903">Direct protein sequencing</keyword>
<keyword id="KW-0249">Electron transport</keyword>
<keyword id="KW-0472">Membrane</keyword>
<keyword id="KW-0479">Metal-binding</keyword>
<keyword id="KW-0732">Signal</keyword>
<keyword id="KW-0793">Thylakoid</keyword>
<keyword id="KW-0813">Transport</keyword>
<name>PLAS_TRIV2</name>
<reference key="1">
    <citation type="journal article" date="1989" name="Mol. Microbiol.">
        <title>The gene for the precursor of plastocyanin from the cyanobacterium Anabaena sp. PCC 7937: isolation, sequence and regulation.</title>
        <authorList>
            <person name="van de Plas J."/>
            <person name="Bovy A."/>
            <person name="Kruyt F."/>
            <person name="de Vrieze G."/>
            <person name="Dassen E."/>
            <person name="Klein B."/>
            <person name="Weisbeek P.J."/>
        </authorList>
    </citation>
    <scope>NUCLEOTIDE SEQUENCE [GENOMIC DNA]</scope>
</reference>
<reference key="2">
    <citation type="journal article" date="2014" name="Stand. Genomic Sci.">
        <title>Complete genome sequence of Anabaena variabilis ATCC 29413.</title>
        <authorList>
            <person name="Thiel T."/>
            <person name="Pratte B.S."/>
            <person name="Zhong J."/>
            <person name="Goodwin L."/>
            <person name="Copeland A."/>
            <person name="Lucas S."/>
            <person name="Han C."/>
            <person name="Pitluck S."/>
            <person name="Land M.L."/>
            <person name="Kyrpides N.C."/>
            <person name="Woyke T."/>
        </authorList>
    </citation>
    <scope>NUCLEOTIDE SEQUENCE [LARGE SCALE GENOMIC DNA]</scope>
    <source>
        <strain>ATCC 29413 / PCC 7937</strain>
    </source>
</reference>
<reference key="3">
    <citation type="journal article" date="1975" name="Biochem. J.">
        <title>Prokaryote-eukaryote relationship and the amino acid sequence of plastocyanin from Anabaena variabilis.</title>
        <authorList>
            <person name="Aitken A."/>
        </authorList>
    </citation>
    <scope>PROTEIN SEQUENCE OF 35-139</scope>
    <scope>SUBCELLULAR LOCATION</scope>
</reference>
<reference key="4">
    <citation type="journal article" date="2000" name="J. Am. Chem. Soc.">
        <title>Elucidation of the paramagnetic R1 relaxation of heteronuclei and protons in Cu(II) plastocyanin from Anabaena variabilis.</title>
        <authorList>
            <person name="Ma L."/>
            <person name="Jorgensen A.M."/>
            <person name="Soerensen G.O."/>
            <person name="Ulstrup J."/>
            <person name="Led J.J."/>
        </authorList>
    </citation>
    <scope>STRUCTURE BY NMR OF 35-138 IN COMPLEX WITH COPPER</scope>
    <scope>COFACTOR</scope>
    <scope>SUBCELLULAR LOCATION</scope>
</reference>
<gene>
    <name type="primary">petE</name>
    <name type="synonym">petE1</name>
    <name type="ordered locus">Ava_2745</name>
</gene>
<proteinExistence type="evidence at protein level"/>
<sequence>MKLIAASLRRLSLAVLTVLLVVSSFAVFTPSAAAETYTVKLGSDKGLLVFEPAKLTIKPGDTVEFLNNKVPPHNVVFDATLNPAKSADLAKSLSHKQLLMSPGQSTSTTFPADAPAGDYSFYCEPHRGAGMVGKITVAS</sequence>
<comment type="function">
    <text evidence="2">Participates in electron transfer between P700 and the cytochrome b6-f complex in photosystem I.</text>
</comment>
<comment type="cofactor">
    <cofactor evidence="2 4">
        <name>Cu(2+)</name>
        <dbReference type="ChEBI" id="CHEBI:29036"/>
    </cofactor>
</comment>
<comment type="subcellular location">
    <subcellularLocation>
        <location evidence="2 3 4">Cellular thylakoid membrane</location>
        <topology evidence="2">Peripheral membrane protein</topology>
        <orientation evidence="2">Lumenal side</orientation>
    </subcellularLocation>
    <text>Loosely bound to the thylakoid inner membrane surface.</text>
</comment>
<comment type="similarity">
    <text evidence="2">Belongs to the plastocyanin family.</text>
</comment>
<accession>Q3M9H8</accession>
<accession>P00301</accession>
<accession>P14114</accession>
<feature type="signal peptide" evidence="1">
    <location>
        <begin position="1"/>
        <end position="34"/>
    </location>
</feature>
<feature type="chain" id="PRO_0000002900" description="Plastocyanin">
    <location>
        <begin position="35"/>
        <end position="139"/>
    </location>
</feature>
<feature type="domain" description="Plastocyanin-like">
    <location>
        <begin position="35"/>
        <end position="135"/>
    </location>
</feature>
<feature type="binding site" evidence="4">
    <location>
        <position position="73"/>
    </location>
    <ligand>
        <name>Cu cation</name>
        <dbReference type="ChEBI" id="CHEBI:23378"/>
    </ligand>
</feature>
<feature type="binding site" evidence="4">
    <location>
        <position position="123"/>
    </location>
    <ligand>
        <name>Cu cation</name>
        <dbReference type="ChEBI" id="CHEBI:23378"/>
    </ligand>
</feature>
<feature type="binding site" evidence="4">
    <location>
        <position position="126"/>
    </location>
    <ligand>
        <name>Cu cation</name>
        <dbReference type="ChEBI" id="CHEBI:23378"/>
    </ligand>
</feature>
<feature type="binding site" evidence="4">
    <location>
        <position position="131"/>
    </location>
    <ligand>
        <name>Cu cation</name>
        <dbReference type="ChEBI" id="CHEBI:23378"/>
    </ligand>
</feature>
<feature type="strand" evidence="5">
    <location>
        <begin position="37"/>
        <end position="39"/>
    </location>
</feature>
<feature type="strand" evidence="5">
    <location>
        <begin position="44"/>
        <end position="46"/>
    </location>
</feature>
<feature type="strand" evidence="5">
    <location>
        <begin position="51"/>
        <end position="57"/>
    </location>
</feature>
<feature type="strand" evidence="5">
    <location>
        <begin position="63"/>
        <end position="65"/>
    </location>
</feature>
<feature type="strand" evidence="5">
    <location>
        <begin position="79"/>
        <end position="82"/>
    </location>
</feature>
<feature type="turn" evidence="5">
    <location>
        <begin position="89"/>
        <end position="93"/>
    </location>
</feature>
<feature type="strand" evidence="5">
    <location>
        <begin position="106"/>
        <end position="108"/>
    </location>
</feature>
<feature type="strand" evidence="5">
    <location>
        <begin position="124"/>
        <end position="126"/>
    </location>
</feature>
<feature type="strand" evidence="5">
    <location>
        <begin position="133"/>
        <end position="137"/>
    </location>
</feature>
<organism>
    <name type="scientific">Trichormus variabilis (strain ATCC 29413 / PCC 7937)</name>
    <name type="common">Anabaena variabilis</name>
    <dbReference type="NCBI Taxonomy" id="240292"/>
    <lineage>
        <taxon>Bacteria</taxon>
        <taxon>Bacillati</taxon>
        <taxon>Cyanobacteriota</taxon>
        <taxon>Cyanophyceae</taxon>
        <taxon>Nostocales</taxon>
        <taxon>Nostocaceae</taxon>
        <taxon>Trichormus</taxon>
    </lineage>
</organism>